<name>CCNA1_RAT</name>
<feature type="chain" id="PRO_0000342166" description="Cyclin-A1">
    <location>
        <begin position="1"/>
        <end position="421"/>
    </location>
</feature>
<feature type="region of interest" description="Disordered" evidence="4">
    <location>
        <begin position="1"/>
        <end position="20"/>
    </location>
</feature>
<proteinExistence type="evidence at transcript level"/>
<evidence type="ECO:0000250" key="1">
    <source>
        <dbReference type="UniProtKB" id="P20248"/>
    </source>
</evidence>
<evidence type="ECO:0000250" key="2">
    <source>
        <dbReference type="UniProtKB" id="P78396"/>
    </source>
</evidence>
<evidence type="ECO:0000250" key="3">
    <source>
        <dbReference type="UniProtKB" id="Q61456"/>
    </source>
</evidence>
<evidence type="ECO:0000256" key="4">
    <source>
        <dbReference type="SAM" id="MobiDB-lite"/>
    </source>
</evidence>
<evidence type="ECO:0000305" key="5"/>
<reference key="1">
    <citation type="journal article" date="2004" name="Genome Res.">
        <title>The status, quality, and expansion of the NIH full-length cDNA project: the Mammalian Gene Collection (MGC).</title>
        <authorList>
            <consortium name="The MGC Project Team"/>
        </authorList>
    </citation>
    <scope>NUCLEOTIDE SEQUENCE [LARGE SCALE MRNA]</scope>
    <source>
        <tissue>Testis</tissue>
    </source>
</reference>
<keyword id="KW-0131">Cell cycle</keyword>
<keyword id="KW-0132">Cell division</keyword>
<keyword id="KW-0195">Cyclin</keyword>
<keyword id="KW-0498">Mitosis</keyword>
<keyword id="KW-0539">Nucleus</keyword>
<keyword id="KW-1185">Reference proteome</keyword>
<keyword id="KW-0832">Ubl conjugation</keyword>
<gene>
    <name type="primary">Ccna1</name>
</gene>
<comment type="function">
    <text evidence="3">May be involved in the control of the cell cycle at the G1/S (start) and G2/M (mitosis) transitions. May primarily function in the control of the germline meiotic cell cycle and additionally in the control of mitotic cell cycle in some somatic cells (By similarity).</text>
</comment>
<comment type="subunit">
    <text evidence="2 3">Interacts with the CDK2 and the CDC2 protein kinases to form a serine/threonine kinase holoenzyme complex. The cyclin subunit imparts substrate specificity to the complex. Does not bind CDK4 and CDK5 (in vitro). The cyclin A1-CDK2 complex interacts with transcription factor E2F-1 and RB proteins. Found in a complex with CDK2, CABLES1 and CCNE1. Interacts with INCA1 and KLHDC9 (By similarity).</text>
</comment>
<comment type="subcellular location">
    <subcellularLocation>
        <location evidence="1">Nucleus</location>
    </subcellularLocation>
</comment>
<comment type="PTM">
    <text evidence="2">Polyubiquitinated via 'Lys-11'-linked ubiquitin by the anaphase-promoting complex (APC/C), leading to its degradation by the proteasome. Deubiquitinated and stabilized by USP37 enables entry into S phase. Ubiquitinated during the G1 phase by the SCF(FBXO31) complex, leading to its proteasomal degradation.</text>
</comment>
<comment type="similarity">
    <text evidence="5">Belongs to the cyclin family. Cyclin AB subfamily.</text>
</comment>
<accession>Q6AY13</accession>
<sequence length="421" mass="47695">MRRHSSKSGVALPPVGQGPDACQMLTRAQLGQDPPQRTVLGVLTENEQYRRACGQEIATIRCFSGSENVFPAAGKKVLPDNGVSEPAKHGFDIYMDDPEQGDRDSCPGREGIVFEDVYEVDTSMLKSDLHFLLDFNTVSPMLVDSTAHAQSEEATDFGSDVINVTEYAEEIHRYLREAEVRHRPKAHYMRKQPDITEGMRAILVDWLVEVGEEYKLRTETLYLAVNFLDRFLSCMSVLRGKLQLVGTAAILLASKYEEIYPPDVDEFVYITDDTYTKRQLLRMEHLLLKVLAFDLTVPTTNQFLLQYLRRQGVCIRTENLAKYVAELSLLEADPFLKYLPSLVAAAAYCLANYIVNRHFWPETLAAFTGYSLNEIVPCLSELHKACLSIPHRPQQAIREKYKASKYLHVSLMEPPVVLPLQ</sequence>
<organism>
    <name type="scientific">Rattus norvegicus</name>
    <name type="common">Rat</name>
    <dbReference type="NCBI Taxonomy" id="10116"/>
    <lineage>
        <taxon>Eukaryota</taxon>
        <taxon>Metazoa</taxon>
        <taxon>Chordata</taxon>
        <taxon>Craniata</taxon>
        <taxon>Vertebrata</taxon>
        <taxon>Euteleostomi</taxon>
        <taxon>Mammalia</taxon>
        <taxon>Eutheria</taxon>
        <taxon>Euarchontoglires</taxon>
        <taxon>Glires</taxon>
        <taxon>Rodentia</taxon>
        <taxon>Myomorpha</taxon>
        <taxon>Muroidea</taxon>
        <taxon>Muridae</taxon>
        <taxon>Murinae</taxon>
        <taxon>Rattus</taxon>
    </lineage>
</organism>
<dbReference type="EMBL" id="BC079234">
    <property type="protein sequence ID" value="AAH79234.1"/>
    <property type="molecule type" value="mRNA"/>
</dbReference>
<dbReference type="RefSeq" id="NP_001011949.1">
    <property type="nucleotide sequence ID" value="NM_001011949.1"/>
</dbReference>
<dbReference type="RefSeq" id="XP_006232421.1">
    <property type="nucleotide sequence ID" value="XM_006232359.5"/>
</dbReference>
<dbReference type="RefSeq" id="XP_006232422.1">
    <property type="nucleotide sequence ID" value="XM_006232360.5"/>
</dbReference>
<dbReference type="RefSeq" id="XP_006232423.1">
    <property type="nucleotide sequence ID" value="XM_006232361.5"/>
</dbReference>
<dbReference type="RefSeq" id="XP_008759209.1">
    <property type="nucleotide sequence ID" value="XM_008760987.4"/>
</dbReference>
<dbReference type="RefSeq" id="XP_008759210.1">
    <property type="nucleotide sequence ID" value="XM_008760988.4"/>
</dbReference>
<dbReference type="RefSeq" id="XP_017446238.1">
    <property type="nucleotide sequence ID" value="XM_017590749.3"/>
</dbReference>
<dbReference type="RefSeq" id="XP_017446239.1">
    <property type="nucleotide sequence ID" value="XM_017590750.3"/>
</dbReference>
<dbReference type="RefSeq" id="XP_038957938.1">
    <property type="nucleotide sequence ID" value="XM_039102010.2"/>
</dbReference>
<dbReference type="SMR" id="Q6AY13"/>
<dbReference type="BioGRID" id="254866">
    <property type="interactions" value="3"/>
</dbReference>
<dbReference type="ComplexPortal" id="CPX-2063">
    <property type="entry name" value="Cyclin A1-CDK1 complex"/>
</dbReference>
<dbReference type="ComplexPortal" id="CPX-2067">
    <property type="entry name" value="Cyclin A1-CDK2 complex"/>
</dbReference>
<dbReference type="FunCoup" id="Q6AY13">
    <property type="interactions" value="325"/>
</dbReference>
<dbReference type="STRING" id="10116.ENSRNOP00000039931"/>
<dbReference type="PhosphoSitePlus" id="Q6AY13"/>
<dbReference type="PaxDb" id="10116-ENSRNOP00000039931"/>
<dbReference type="Ensembl" id="ENSRNOT00000040002.5">
    <property type="protein sequence ID" value="ENSRNOP00000039931.3"/>
    <property type="gene ID" value="ENSRNOG00000014052.7"/>
</dbReference>
<dbReference type="GeneID" id="295052"/>
<dbReference type="KEGG" id="rno:295052"/>
<dbReference type="UCSC" id="RGD:1310639">
    <property type="organism name" value="rat"/>
</dbReference>
<dbReference type="AGR" id="RGD:1310639"/>
<dbReference type="CTD" id="8900"/>
<dbReference type="RGD" id="1310639">
    <property type="gene designation" value="Ccna1"/>
</dbReference>
<dbReference type="eggNOG" id="KOG0654">
    <property type="taxonomic scope" value="Eukaryota"/>
</dbReference>
<dbReference type="GeneTree" id="ENSGT00940000157940"/>
<dbReference type="HOGENOM" id="CLU_020695_3_2_1"/>
<dbReference type="InParanoid" id="Q6AY13"/>
<dbReference type="OMA" id="YKSSKYC"/>
<dbReference type="OrthoDB" id="5590282at2759"/>
<dbReference type="PhylomeDB" id="Q6AY13"/>
<dbReference type="TreeFam" id="TF101002"/>
<dbReference type="Reactome" id="R-RNO-1538133">
    <property type="pathway name" value="G0 and Early G1"/>
</dbReference>
<dbReference type="Reactome" id="R-RNO-171319">
    <property type="pathway name" value="Telomere Extension By Telomerase"/>
</dbReference>
<dbReference type="Reactome" id="R-RNO-174184">
    <property type="pathway name" value="Cdc20:Phospho-APC/C mediated degradation of Cyclin A"/>
</dbReference>
<dbReference type="Reactome" id="R-RNO-176408">
    <property type="pathway name" value="Regulation of APC/C activators between G1/S and early anaphase"/>
</dbReference>
<dbReference type="Reactome" id="R-RNO-187577">
    <property type="pathway name" value="SCF(Skp2)-mediated degradation of p27/p21"/>
</dbReference>
<dbReference type="Reactome" id="R-RNO-2559582">
    <property type="pathway name" value="Senescence-Associated Secretory Phenotype (SASP)"/>
</dbReference>
<dbReference type="Reactome" id="R-RNO-2559586">
    <property type="pathway name" value="DNA Damage/Telomere Stress Induced Senescence"/>
</dbReference>
<dbReference type="Reactome" id="R-RNO-5689880">
    <property type="pathway name" value="Ub-specific processing proteases"/>
</dbReference>
<dbReference type="Reactome" id="R-RNO-5693607">
    <property type="pathway name" value="Processing of DNA double-strand break ends"/>
</dbReference>
<dbReference type="Reactome" id="R-RNO-6804116">
    <property type="pathway name" value="TP53 Regulates Transcription of Genes Involved in G1 Cell Cycle Arrest"/>
</dbReference>
<dbReference type="Reactome" id="R-RNO-6804756">
    <property type="pathway name" value="Regulation of TP53 Activity through Phosphorylation"/>
</dbReference>
<dbReference type="Reactome" id="R-RNO-6804757">
    <property type="pathway name" value="Regulation of TP53 Degradation"/>
</dbReference>
<dbReference type="Reactome" id="R-RNO-68911">
    <property type="pathway name" value="G2 Phase"/>
</dbReference>
<dbReference type="Reactome" id="R-RNO-68949">
    <property type="pathway name" value="Orc1 removal from chromatin"/>
</dbReference>
<dbReference type="Reactome" id="R-RNO-69017">
    <property type="pathway name" value="CDK-mediated phosphorylation and removal of Cdc6"/>
</dbReference>
<dbReference type="Reactome" id="R-RNO-69273">
    <property type="pathway name" value="Cyclin A/B1/B2 associated events during G2/M transition"/>
</dbReference>
<dbReference type="Reactome" id="R-RNO-69563">
    <property type="pathway name" value="p53-Dependent G1 DNA Damage Response"/>
</dbReference>
<dbReference type="Reactome" id="R-RNO-69656">
    <property type="pathway name" value="Cyclin A:Cdk2-associated events at S phase entry"/>
</dbReference>
<dbReference type="PRO" id="PR:Q6AY13"/>
<dbReference type="Proteomes" id="UP000002494">
    <property type="component" value="Chromosome 2"/>
</dbReference>
<dbReference type="Bgee" id="ENSRNOG00000014052">
    <property type="expression patterns" value="Expressed in testis and 11 other cell types or tissues"/>
</dbReference>
<dbReference type="GO" id="GO:0097123">
    <property type="term" value="C:cyclin A1-CDK2 complex"/>
    <property type="evidence" value="ECO:0000266"/>
    <property type="project" value="RGD"/>
</dbReference>
<dbReference type="GO" id="GO:0097124">
    <property type="term" value="C:cyclin A2-CDK2 complex"/>
    <property type="evidence" value="ECO:0000318"/>
    <property type="project" value="GO_Central"/>
</dbReference>
<dbReference type="GO" id="GO:0005737">
    <property type="term" value="C:cytoplasm"/>
    <property type="evidence" value="ECO:0000318"/>
    <property type="project" value="GO_Central"/>
</dbReference>
<dbReference type="GO" id="GO:0005815">
    <property type="term" value="C:microtubule organizing center"/>
    <property type="evidence" value="ECO:0000318"/>
    <property type="project" value="GO_Central"/>
</dbReference>
<dbReference type="GO" id="GO:0005634">
    <property type="term" value="C:nucleus"/>
    <property type="evidence" value="ECO:0000318"/>
    <property type="project" value="GO_Central"/>
</dbReference>
<dbReference type="GO" id="GO:0016538">
    <property type="term" value="F:cyclin-dependent protein serine/threonine kinase regulator activity"/>
    <property type="evidence" value="ECO:0000318"/>
    <property type="project" value="GO_Central"/>
</dbReference>
<dbReference type="GO" id="GO:0019901">
    <property type="term" value="F:protein kinase binding"/>
    <property type="evidence" value="ECO:0007669"/>
    <property type="project" value="UniProtKB-ARBA"/>
</dbReference>
<dbReference type="GO" id="GO:0051301">
    <property type="term" value="P:cell division"/>
    <property type="evidence" value="ECO:0007669"/>
    <property type="project" value="UniProtKB-KW"/>
</dbReference>
<dbReference type="GO" id="GO:0000082">
    <property type="term" value="P:G1/S transition of mitotic cell cycle"/>
    <property type="evidence" value="ECO:0000318"/>
    <property type="project" value="GO_Central"/>
</dbReference>
<dbReference type="CDD" id="cd20560">
    <property type="entry name" value="CYCLIN_CCNA1_rpt1"/>
    <property type="match status" value="1"/>
</dbReference>
<dbReference type="CDD" id="cd20563">
    <property type="entry name" value="CYCLIN_CCNA1_rpt2"/>
    <property type="match status" value="1"/>
</dbReference>
<dbReference type="FunFam" id="1.10.472.10:FF:000001">
    <property type="entry name" value="G2/mitotic-specific cyclin"/>
    <property type="match status" value="1"/>
</dbReference>
<dbReference type="Gene3D" id="1.10.472.10">
    <property type="entry name" value="Cyclin-like"/>
    <property type="match status" value="2"/>
</dbReference>
<dbReference type="InterPro" id="IPR039361">
    <property type="entry name" value="Cyclin"/>
</dbReference>
<dbReference type="InterPro" id="IPR032447">
    <property type="entry name" value="Cyclin-A_N"/>
</dbReference>
<dbReference type="InterPro" id="IPR013763">
    <property type="entry name" value="Cyclin-like_dom"/>
</dbReference>
<dbReference type="InterPro" id="IPR036915">
    <property type="entry name" value="Cyclin-like_sf"/>
</dbReference>
<dbReference type="InterPro" id="IPR004367">
    <property type="entry name" value="Cyclin_C-dom"/>
</dbReference>
<dbReference type="InterPro" id="IPR006671">
    <property type="entry name" value="Cyclin_N"/>
</dbReference>
<dbReference type="InterPro" id="IPR048258">
    <property type="entry name" value="Cyclins_cyclin-box"/>
</dbReference>
<dbReference type="PANTHER" id="PTHR10177">
    <property type="entry name" value="CYCLINS"/>
    <property type="match status" value="1"/>
</dbReference>
<dbReference type="Pfam" id="PF02984">
    <property type="entry name" value="Cyclin_C"/>
    <property type="match status" value="1"/>
</dbReference>
<dbReference type="Pfam" id="PF00134">
    <property type="entry name" value="Cyclin_N"/>
    <property type="match status" value="1"/>
</dbReference>
<dbReference type="Pfam" id="PF16500">
    <property type="entry name" value="Cyclin_N2"/>
    <property type="match status" value="1"/>
</dbReference>
<dbReference type="SMART" id="SM00385">
    <property type="entry name" value="CYCLIN"/>
    <property type="match status" value="2"/>
</dbReference>
<dbReference type="SMART" id="SM01332">
    <property type="entry name" value="Cyclin_C"/>
    <property type="match status" value="1"/>
</dbReference>
<dbReference type="SUPFAM" id="SSF47954">
    <property type="entry name" value="Cyclin-like"/>
    <property type="match status" value="2"/>
</dbReference>
<dbReference type="PROSITE" id="PS00292">
    <property type="entry name" value="CYCLINS"/>
    <property type="match status" value="1"/>
</dbReference>
<protein>
    <recommendedName>
        <fullName>Cyclin-A1</fullName>
    </recommendedName>
</protein>